<protein>
    <recommendedName>
        <fullName evidence="1">Phosphatidylglycerol--prolipoprotein diacylglyceryl transferase</fullName>
        <ecNumber evidence="1">2.5.1.145</ecNumber>
    </recommendedName>
</protein>
<sequence>MTSSYLHFPEFDPVIFSIGPVALHWYGLMYLVGFIFAMWLATRRANRPGSGWTKNEVENLLYAGFLGVFLGGRIGYVLFYNFPQFMADPLYLFRVWDGGMSFHGGLIGVIVVMIIFARRTKRSFFQVSDFIAPLIPFGLGAGRLGNFINGELWGRVDPNFPFAMLFPGSRTEDILLLQTNPQWQSIFDTYGVLPRHPSQLYELLLEGVVLFIILNLYIRKPRPMGAVSGLFLIGYGAFRIIVEFFRQPDAQFTGAWVQYISMGQILSIPMIVAGVIMMVWAYRRSPQQHVS</sequence>
<reference key="1">
    <citation type="journal article" date="2001" name="Nature">
        <title>Genome sequence of enterohaemorrhagic Escherichia coli O157:H7.</title>
        <authorList>
            <person name="Perna N.T."/>
            <person name="Plunkett G. III"/>
            <person name="Burland V."/>
            <person name="Mau B."/>
            <person name="Glasner J.D."/>
            <person name="Rose D.J."/>
            <person name="Mayhew G.F."/>
            <person name="Evans P.S."/>
            <person name="Gregor J."/>
            <person name="Kirkpatrick H.A."/>
            <person name="Posfai G."/>
            <person name="Hackett J."/>
            <person name="Klink S."/>
            <person name="Boutin A."/>
            <person name="Shao Y."/>
            <person name="Miller L."/>
            <person name="Grotbeck E.J."/>
            <person name="Davis N.W."/>
            <person name="Lim A."/>
            <person name="Dimalanta E.T."/>
            <person name="Potamousis K."/>
            <person name="Apodaca J."/>
            <person name="Anantharaman T.S."/>
            <person name="Lin J."/>
            <person name="Yen G."/>
            <person name="Schwartz D.C."/>
            <person name="Welch R.A."/>
            <person name="Blattner F.R."/>
        </authorList>
    </citation>
    <scope>NUCLEOTIDE SEQUENCE [LARGE SCALE GENOMIC DNA]</scope>
    <source>
        <strain>O157:H7 / EDL933 / ATCC 700927 / EHEC</strain>
    </source>
</reference>
<reference key="2">
    <citation type="journal article" date="2001" name="DNA Res.">
        <title>Complete genome sequence of enterohemorrhagic Escherichia coli O157:H7 and genomic comparison with a laboratory strain K-12.</title>
        <authorList>
            <person name="Hayashi T."/>
            <person name="Makino K."/>
            <person name="Ohnishi M."/>
            <person name="Kurokawa K."/>
            <person name="Ishii K."/>
            <person name="Yokoyama K."/>
            <person name="Han C.-G."/>
            <person name="Ohtsubo E."/>
            <person name="Nakayama K."/>
            <person name="Murata T."/>
            <person name="Tanaka M."/>
            <person name="Tobe T."/>
            <person name="Iida T."/>
            <person name="Takami H."/>
            <person name="Honda T."/>
            <person name="Sasakawa C."/>
            <person name="Ogasawara N."/>
            <person name="Yasunaga T."/>
            <person name="Kuhara S."/>
            <person name="Shiba T."/>
            <person name="Hattori M."/>
            <person name="Shinagawa H."/>
        </authorList>
    </citation>
    <scope>NUCLEOTIDE SEQUENCE [LARGE SCALE GENOMIC DNA]</scope>
    <source>
        <strain>O157:H7 / Sakai / RIMD 0509952 / EHEC</strain>
    </source>
</reference>
<evidence type="ECO:0000255" key="1">
    <source>
        <dbReference type="HAMAP-Rule" id="MF_01147"/>
    </source>
</evidence>
<evidence type="ECO:0000305" key="2"/>
<comment type="function">
    <text evidence="1">Catalyzes the transfer of the diacylglyceryl group from phosphatidylglycerol to the sulfhydryl group of the N-terminal cysteine of a prolipoprotein, the first step in the formation of mature lipoproteins.</text>
</comment>
<comment type="catalytic activity">
    <reaction evidence="1">
        <text>L-cysteinyl-[prolipoprotein] + a 1,2-diacyl-sn-glycero-3-phospho-(1'-sn-glycerol) = an S-1,2-diacyl-sn-glyceryl-L-cysteinyl-[prolipoprotein] + sn-glycerol 1-phosphate + H(+)</text>
        <dbReference type="Rhea" id="RHEA:56712"/>
        <dbReference type="Rhea" id="RHEA-COMP:14679"/>
        <dbReference type="Rhea" id="RHEA-COMP:14680"/>
        <dbReference type="ChEBI" id="CHEBI:15378"/>
        <dbReference type="ChEBI" id="CHEBI:29950"/>
        <dbReference type="ChEBI" id="CHEBI:57685"/>
        <dbReference type="ChEBI" id="CHEBI:64716"/>
        <dbReference type="ChEBI" id="CHEBI:140658"/>
        <dbReference type="EC" id="2.5.1.145"/>
    </reaction>
</comment>
<comment type="pathway">
    <text evidence="1">Protein modification; lipoprotein biosynthesis (diacylglyceryl transfer).</text>
</comment>
<comment type="subcellular location">
    <subcellularLocation>
        <location evidence="1">Cell inner membrane</location>
        <topology evidence="1">Multi-pass membrane protein</topology>
    </subcellularLocation>
</comment>
<comment type="similarity">
    <text evidence="1 2">Belongs to the Lgt family.</text>
</comment>
<feature type="chain" id="PRO_0000172597" description="Phosphatidylglycerol--prolipoprotein diacylglyceryl transferase">
    <location>
        <begin position="1"/>
        <end position="291"/>
    </location>
</feature>
<feature type="transmembrane region" description="Helical" evidence="1">
    <location>
        <begin position="21"/>
        <end position="41"/>
    </location>
</feature>
<feature type="transmembrane region" description="Helical" evidence="1">
    <location>
        <begin position="60"/>
        <end position="80"/>
    </location>
</feature>
<feature type="transmembrane region" description="Helical" evidence="1">
    <location>
        <begin position="96"/>
        <end position="116"/>
    </location>
</feature>
<feature type="transmembrane region" description="Helical" evidence="1">
    <location>
        <begin position="225"/>
        <end position="245"/>
    </location>
</feature>
<feature type="transmembrane region" description="Helical" evidence="1">
    <location>
        <begin position="260"/>
        <end position="280"/>
    </location>
</feature>
<feature type="binding site" evidence="1">
    <location>
        <position position="143"/>
    </location>
    <ligand>
        <name>a 1,2-diacyl-sn-glycero-3-phospho-(1'-sn-glycerol)</name>
        <dbReference type="ChEBI" id="CHEBI:64716"/>
    </ligand>
</feature>
<keyword id="KW-0997">Cell inner membrane</keyword>
<keyword id="KW-1003">Cell membrane</keyword>
<keyword id="KW-0472">Membrane</keyword>
<keyword id="KW-1185">Reference proteome</keyword>
<keyword id="KW-0808">Transferase</keyword>
<keyword id="KW-0812">Transmembrane</keyword>
<keyword id="KW-1133">Transmembrane helix</keyword>
<gene>
    <name evidence="1" type="primary">lgt</name>
    <name type="synonym">umpA</name>
    <name type="ordered locus">Z4145</name>
    <name type="ordered locus">ECs3685</name>
</gene>
<accession>P60956</accession>
<accession>P37149</accession>
<name>LGT_ECO57</name>
<dbReference type="EC" id="2.5.1.145" evidence="1"/>
<dbReference type="EMBL" id="AE005174">
    <property type="protein sequence ID" value="AAG57939.1"/>
    <property type="molecule type" value="Genomic_DNA"/>
</dbReference>
<dbReference type="EMBL" id="BA000007">
    <property type="protein sequence ID" value="BAB37108.1"/>
    <property type="molecule type" value="Genomic_DNA"/>
</dbReference>
<dbReference type="PIR" id="E91089">
    <property type="entry name" value="E91089"/>
</dbReference>
<dbReference type="PIR" id="G85934">
    <property type="entry name" value="G85934"/>
</dbReference>
<dbReference type="RefSeq" id="NP_311712.1">
    <property type="nucleotide sequence ID" value="NC_002695.1"/>
</dbReference>
<dbReference type="RefSeq" id="WP_000204658.1">
    <property type="nucleotide sequence ID" value="NZ_VOAI01000003.1"/>
</dbReference>
<dbReference type="SMR" id="P60956"/>
<dbReference type="STRING" id="155864.Z4145"/>
<dbReference type="GeneID" id="916500"/>
<dbReference type="GeneID" id="93779170"/>
<dbReference type="KEGG" id="ece:Z4145"/>
<dbReference type="KEGG" id="ecs:ECs_3685"/>
<dbReference type="PATRIC" id="fig|386585.9.peg.3852"/>
<dbReference type="eggNOG" id="COG0682">
    <property type="taxonomic scope" value="Bacteria"/>
</dbReference>
<dbReference type="HOGENOM" id="CLU_013386_1_0_6"/>
<dbReference type="OMA" id="SIRWYGL"/>
<dbReference type="UniPathway" id="UPA00664"/>
<dbReference type="Proteomes" id="UP000000558">
    <property type="component" value="Chromosome"/>
</dbReference>
<dbReference type="Proteomes" id="UP000002519">
    <property type="component" value="Chromosome"/>
</dbReference>
<dbReference type="GO" id="GO:0005886">
    <property type="term" value="C:plasma membrane"/>
    <property type="evidence" value="ECO:0007669"/>
    <property type="project" value="UniProtKB-SubCell"/>
</dbReference>
<dbReference type="GO" id="GO:0008961">
    <property type="term" value="F:phosphatidylglycerol-prolipoprotein diacylglyceryl transferase activity"/>
    <property type="evidence" value="ECO:0007669"/>
    <property type="project" value="UniProtKB-UniRule"/>
</dbReference>
<dbReference type="GO" id="GO:0042158">
    <property type="term" value="P:lipoprotein biosynthetic process"/>
    <property type="evidence" value="ECO:0007669"/>
    <property type="project" value="UniProtKB-UniRule"/>
</dbReference>
<dbReference type="HAMAP" id="MF_01147">
    <property type="entry name" value="Lgt"/>
    <property type="match status" value="1"/>
</dbReference>
<dbReference type="InterPro" id="IPR001640">
    <property type="entry name" value="Lgt"/>
</dbReference>
<dbReference type="NCBIfam" id="TIGR00544">
    <property type="entry name" value="lgt"/>
    <property type="match status" value="1"/>
</dbReference>
<dbReference type="PANTHER" id="PTHR30589:SF0">
    <property type="entry name" value="PHOSPHATIDYLGLYCEROL--PROLIPOPROTEIN DIACYLGLYCERYL TRANSFERASE"/>
    <property type="match status" value="1"/>
</dbReference>
<dbReference type="PANTHER" id="PTHR30589">
    <property type="entry name" value="PROLIPOPROTEIN DIACYLGLYCERYL TRANSFERASE"/>
    <property type="match status" value="1"/>
</dbReference>
<dbReference type="Pfam" id="PF01790">
    <property type="entry name" value="LGT"/>
    <property type="match status" value="1"/>
</dbReference>
<dbReference type="PROSITE" id="PS01311">
    <property type="entry name" value="LGT"/>
    <property type="match status" value="1"/>
</dbReference>
<proteinExistence type="inferred from homology"/>
<organism>
    <name type="scientific">Escherichia coli O157:H7</name>
    <dbReference type="NCBI Taxonomy" id="83334"/>
    <lineage>
        <taxon>Bacteria</taxon>
        <taxon>Pseudomonadati</taxon>
        <taxon>Pseudomonadota</taxon>
        <taxon>Gammaproteobacteria</taxon>
        <taxon>Enterobacterales</taxon>
        <taxon>Enterobacteriaceae</taxon>
        <taxon>Escherichia</taxon>
    </lineage>
</organism>